<protein>
    <recommendedName>
        <fullName evidence="3">Succinate--CoA ligase [ADP-forming] subunit beta, mitochondrial</fullName>
        <ecNumber evidence="3">6.2.1.5</ecNumber>
    </recommendedName>
    <alternativeName>
        <fullName evidence="3">ATP-specific succinyl-CoA synthetase subunit beta</fullName>
        <shortName evidence="3">A-SCS</shortName>
    </alternativeName>
    <alternativeName>
        <fullName evidence="3">Succinyl-CoA synthetase beta-A chain</fullName>
        <shortName evidence="3">SCS-betaA</shortName>
    </alternativeName>
</protein>
<comment type="function">
    <text evidence="3">ATP-specific succinyl-CoA synthetase functions in the citric acid cycle (TCA), coupling the hydrolysis of succinyl-CoA to the synthesis of ATP and thus represents the only step of substrate-level phosphorylation in the TCA. The beta subunit provides nucleotide specificity of the enzyme and binds the substrate succinate, while the binding sites for coenzyme A and phosphate are found in the alpha subunit.</text>
</comment>
<comment type="catalytic activity">
    <reaction evidence="3">
        <text>succinate + ATP + CoA = succinyl-CoA + ADP + phosphate</text>
        <dbReference type="Rhea" id="RHEA:17661"/>
        <dbReference type="ChEBI" id="CHEBI:30031"/>
        <dbReference type="ChEBI" id="CHEBI:30616"/>
        <dbReference type="ChEBI" id="CHEBI:43474"/>
        <dbReference type="ChEBI" id="CHEBI:57287"/>
        <dbReference type="ChEBI" id="CHEBI:57292"/>
        <dbReference type="ChEBI" id="CHEBI:456216"/>
        <dbReference type="EC" id="6.2.1.5"/>
    </reaction>
</comment>
<comment type="cofactor">
    <cofactor evidence="3">
        <name>Mg(2+)</name>
        <dbReference type="ChEBI" id="CHEBI:18420"/>
    </cofactor>
    <text evidence="3">Binds 1 Mg(2+) ion per subunit.</text>
</comment>
<comment type="pathway">
    <text evidence="3">Carbohydrate metabolism; tricarboxylic acid cycle; succinate from succinyl-CoA (ligase route): step 1/1.</text>
</comment>
<comment type="subunit">
    <text evidence="1 3">Heterodimer of an alpha and a beta subunit. The beta subunit determines specificity for ATP. Interacts with ALAS2 (By similarity).</text>
</comment>
<comment type="subcellular location">
    <subcellularLocation>
        <location evidence="3">Mitochondrion</location>
    </subcellularLocation>
</comment>
<comment type="similarity">
    <text evidence="3">Belongs to the succinate/malate CoA ligase beta subunit family. ATP-specific subunit beta subfamily.</text>
</comment>
<reference key="1">
    <citation type="submission" date="2005-06" db="EMBL/GenBank/DDBJ databases">
        <title>DNA sequences of macaque genes expressed in brain or testis and its evolutionary implications.</title>
        <authorList>
            <consortium name="International consortium for macaque cDNA sequencing and analysis"/>
        </authorList>
    </citation>
    <scope>NUCLEOTIDE SEQUENCE [LARGE SCALE MRNA]</scope>
    <source>
        <tissue>Frontal cortex</tissue>
    </source>
</reference>
<name>SUCB1_MACFA</name>
<sequence length="463" mass="49960">MAASVFYGRLLAVATLRNHRPRTALGAAAQVLGSSGLFNNHGLQVQQQQQRNLSLHEYMSMELLQEAGVSIPKGCVAKSPDEAYAVAKKLGSKDVVIKAQVLAGGRGKGTFESGLKGGVKIVFSPEEAKAVSSQMIGKKLFTKQTGEKGRICNQVLVCERKYPRREYYFAITMERSFQGPVLIGSSQGGVNIEDVAAETPEAIITEPIDIEEGIKKEQALQLAQKMGFPPNIVESAAENMVKLYSLFLKYDATMIEINPMVEDSDGAVLCMDAKINFDSNSAYRQKKIFDLQDWTQEDERDKDAAQANLNYIGLDGNIGCLVNGAGLAMATMDIIKLHGGTPANFLDVGGGATVHQVTEAFKLITSDKKVLAILVNIFGGIMSCDVIAQGIVTALKDLEIKIPVVVRLQGTRVDDAKALIAGSGLKILACDDLDEAARMVVKLSEIVTLAKQAHVDVKFQLPI</sequence>
<gene>
    <name evidence="3" type="primary">SUCLA2</name>
    <name type="ORF">QflA-11886</name>
</gene>
<proteinExistence type="evidence at transcript level"/>
<evidence type="ECO:0000250" key="1">
    <source>
        <dbReference type="UniProtKB" id="Q9P2R7"/>
    </source>
</evidence>
<evidence type="ECO:0000250" key="2">
    <source>
        <dbReference type="UniProtKB" id="Q9Z2I9"/>
    </source>
</evidence>
<evidence type="ECO:0000255" key="3">
    <source>
        <dbReference type="HAMAP-Rule" id="MF_03220"/>
    </source>
</evidence>
<accession>Q4R517</accession>
<feature type="transit peptide" description="Mitochondrion" evidence="3">
    <location>
        <begin position="1"/>
        <end position="53"/>
    </location>
</feature>
<feature type="chain" id="PRO_0000270821" description="Succinate--CoA ligase [ADP-forming] subunit beta, mitochondrial" evidence="3">
    <location>
        <begin position="54"/>
        <end position="463"/>
    </location>
</feature>
<feature type="domain" description="ATP-grasp" evidence="3">
    <location>
        <begin position="61"/>
        <end position="288"/>
    </location>
</feature>
<feature type="binding site" evidence="3">
    <location>
        <position position="98"/>
    </location>
    <ligand>
        <name>ATP</name>
        <dbReference type="ChEBI" id="CHEBI:30616"/>
    </ligand>
</feature>
<feature type="binding site" evidence="3">
    <location>
        <begin position="105"/>
        <end position="107"/>
    </location>
    <ligand>
        <name>ATP</name>
        <dbReference type="ChEBI" id="CHEBI:30616"/>
    </ligand>
</feature>
<feature type="binding site" evidence="3">
    <location>
        <position position="258"/>
    </location>
    <ligand>
        <name>Mg(2+)</name>
        <dbReference type="ChEBI" id="CHEBI:18420"/>
    </ligand>
</feature>
<feature type="binding site" evidence="3">
    <location>
        <position position="272"/>
    </location>
    <ligand>
        <name>Mg(2+)</name>
        <dbReference type="ChEBI" id="CHEBI:18420"/>
    </ligand>
</feature>
<feature type="binding site" evidence="3">
    <location>
        <position position="323"/>
    </location>
    <ligand>
        <name>substrate</name>
        <note>ligand shared with subunit alpha</note>
    </ligand>
</feature>
<feature type="binding site" evidence="3">
    <location>
        <begin position="380"/>
        <end position="382"/>
    </location>
    <ligand>
        <name>substrate</name>
        <note>ligand shared with subunit alpha</note>
    </ligand>
</feature>
<feature type="site" description="Important for substrate specificity" evidence="3">
    <location>
        <position position="94"/>
    </location>
</feature>
<feature type="site" description="Important for substrate specificity" evidence="3">
    <location>
        <position position="162"/>
    </location>
</feature>
<feature type="modified residue" description="N6-acetyllysine" evidence="1">
    <location>
        <position position="78"/>
    </location>
</feature>
<feature type="modified residue" description="Phosphotyrosine" evidence="1">
    <location>
        <position position="84"/>
    </location>
</feature>
<feature type="modified residue" description="N6-acetyllysine; alternate" evidence="2">
    <location>
        <position position="88"/>
    </location>
</feature>
<feature type="modified residue" description="N6-succinyllysine; alternate" evidence="2">
    <location>
        <position position="88"/>
    </location>
</feature>
<feature type="modified residue" description="N6-acetyllysine" evidence="2">
    <location>
        <position position="129"/>
    </location>
</feature>
<feature type="modified residue" description="N6-acetyllysine" evidence="2">
    <location>
        <position position="139"/>
    </location>
</feature>
<feature type="modified residue" description="N6-acetyllysine" evidence="1">
    <location>
        <position position="143"/>
    </location>
</feature>
<feature type="modified residue" description="N6-acetyllysine" evidence="2">
    <location>
        <position position="216"/>
    </location>
</feature>
<feature type="modified residue" description="Phosphoserine" evidence="2">
    <location>
        <position position="279"/>
    </location>
</feature>
<feature type="modified residue" description="Phosphothreonine" evidence="2">
    <location>
        <position position="341"/>
    </location>
</feature>
<feature type="modified residue" description="N6-acetyllysine" evidence="2">
    <location>
        <position position="368"/>
    </location>
</feature>
<organism>
    <name type="scientific">Macaca fascicularis</name>
    <name type="common">Crab-eating macaque</name>
    <name type="synonym">Cynomolgus monkey</name>
    <dbReference type="NCBI Taxonomy" id="9541"/>
    <lineage>
        <taxon>Eukaryota</taxon>
        <taxon>Metazoa</taxon>
        <taxon>Chordata</taxon>
        <taxon>Craniata</taxon>
        <taxon>Vertebrata</taxon>
        <taxon>Euteleostomi</taxon>
        <taxon>Mammalia</taxon>
        <taxon>Eutheria</taxon>
        <taxon>Euarchontoglires</taxon>
        <taxon>Primates</taxon>
        <taxon>Haplorrhini</taxon>
        <taxon>Catarrhini</taxon>
        <taxon>Cercopithecidae</taxon>
        <taxon>Cercopithecinae</taxon>
        <taxon>Macaca</taxon>
    </lineage>
</organism>
<keyword id="KW-0007">Acetylation</keyword>
<keyword id="KW-0067">ATP-binding</keyword>
<keyword id="KW-0436">Ligase</keyword>
<keyword id="KW-0460">Magnesium</keyword>
<keyword id="KW-0479">Metal-binding</keyword>
<keyword id="KW-0496">Mitochondrion</keyword>
<keyword id="KW-0547">Nucleotide-binding</keyword>
<keyword id="KW-0597">Phosphoprotein</keyword>
<keyword id="KW-1185">Reference proteome</keyword>
<keyword id="KW-0809">Transit peptide</keyword>
<keyword id="KW-0816">Tricarboxylic acid cycle</keyword>
<dbReference type="EC" id="6.2.1.5" evidence="3"/>
<dbReference type="EMBL" id="AB169727">
    <property type="protein sequence ID" value="BAE01808.1"/>
    <property type="molecule type" value="mRNA"/>
</dbReference>
<dbReference type="RefSeq" id="NP_001270365.1">
    <property type="nucleotide sequence ID" value="NM_001283436.1"/>
</dbReference>
<dbReference type="SMR" id="Q4R517"/>
<dbReference type="STRING" id="9541.ENSMFAP00000023685"/>
<dbReference type="eggNOG" id="KOG2799">
    <property type="taxonomic scope" value="Eukaryota"/>
</dbReference>
<dbReference type="UniPathway" id="UPA00223">
    <property type="reaction ID" value="UER00999"/>
</dbReference>
<dbReference type="Proteomes" id="UP000233100">
    <property type="component" value="Unplaced"/>
</dbReference>
<dbReference type="GO" id="GO:0005739">
    <property type="term" value="C:mitochondrion"/>
    <property type="evidence" value="ECO:0007669"/>
    <property type="project" value="UniProtKB-SubCell"/>
</dbReference>
<dbReference type="GO" id="GO:0042709">
    <property type="term" value="C:succinate-CoA ligase complex"/>
    <property type="evidence" value="ECO:0007669"/>
    <property type="project" value="TreeGrafter"/>
</dbReference>
<dbReference type="GO" id="GO:0005524">
    <property type="term" value="F:ATP binding"/>
    <property type="evidence" value="ECO:0007669"/>
    <property type="project" value="UniProtKB-UniRule"/>
</dbReference>
<dbReference type="GO" id="GO:0000287">
    <property type="term" value="F:magnesium ion binding"/>
    <property type="evidence" value="ECO:0007669"/>
    <property type="project" value="UniProtKB-UniRule"/>
</dbReference>
<dbReference type="GO" id="GO:0004775">
    <property type="term" value="F:succinate-CoA ligase (ADP-forming) activity"/>
    <property type="evidence" value="ECO:0007669"/>
    <property type="project" value="UniProtKB-UniRule"/>
</dbReference>
<dbReference type="GO" id="GO:0006104">
    <property type="term" value="P:succinyl-CoA metabolic process"/>
    <property type="evidence" value="ECO:0007669"/>
    <property type="project" value="TreeGrafter"/>
</dbReference>
<dbReference type="GO" id="GO:0006099">
    <property type="term" value="P:tricarboxylic acid cycle"/>
    <property type="evidence" value="ECO:0007669"/>
    <property type="project" value="UniProtKB-UniRule"/>
</dbReference>
<dbReference type="FunFam" id="3.30.470.20:FF:000002">
    <property type="entry name" value="Succinate--CoA ligase [ADP-forming] subunit beta"/>
    <property type="match status" value="1"/>
</dbReference>
<dbReference type="FunFam" id="3.40.50.261:FF:000001">
    <property type="entry name" value="Succinate--CoA ligase [ADP-forming] subunit beta"/>
    <property type="match status" value="1"/>
</dbReference>
<dbReference type="FunFam" id="3.30.1490.20:FF:000040">
    <property type="entry name" value="Succinate--CoA ligase [ADP-forming] subunit beta mitochondrial"/>
    <property type="match status" value="1"/>
</dbReference>
<dbReference type="Gene3D" id="3.30.1490.20">
    <property type="entry name" value="ATP-grasp fold, A domain"/>
    <property type="match status" value="1"/>
</dbReference>
<dbReference type="Gene3D" id="3.30.470.20">
    <property type="entry name" value="ATP-grasp fold, B domain"/>
    <property type="match status" value="1"/>
</dbReference>
<dbReference type="Gene3D" id="3.40.50.261">
    <property type="entry name" value="Succinyl-CoA synthetase domains"/>
    <property type="match status" value="1"/>
</dbReference>
<dbReference type="HAMAP" id="MF_00558">
    <property type="entry name" value="Succ_CoA_beta"/>
    <property type="match status" value="1"/>
</dbReference>
<dbReference type="HAMAP" id="MF_03220">
    <property type="entry name" value="Succ_CoA_betaA_euk"/>
    <property type="match status" value="1"/>
</dbReference>
<dbReference type="InterPro" id="IPR011761">
    <property type="entry name" value="ATP-grasp"/>
</dbReference>
<dbReference type="InterPro" id="IPR013650">
    <property type="entry name" value="ATP-grasp_succ-CoA_synth-type"/>
</dbReference>
<dbReference type="InterPro" id="IPR013815">
    <property type="entry name" value="ATP_grasp_subdomain_1"/>
</dbReference>
<dbReference type="InterPro" id="IPR017866">
    <property type="entry name" value="Succ-CoA_synthase_bsu_CS"/>
</dbReference>
<dbReference type="InterPro" id="IPR005811">
    <property type="entry name" value="SUCC_ACL_C"/>
</dbReference>
<dbReference type="InterPro" id="IPR034723">
    <property type="entry name" value="Succ_CoA_betaA_euk"/>
</dbReference>
<dbReference type="InterPro" id="IPR005809">
    <property type="entry name" value="Succ_CoA_ligase-like_bsu"/>
</dbReference>
<dbReference type="InterPro" id="IPR016102">
    <property type="entry name" value="Succinyl-CoA_synth-like"/>
</dbReference>
<dbReference type="NCBIfam" id="NF001913">
    <property type="entry name" value="PRK00696.1"/>
    <property type="match status" value="1"/>
</dbReference>
<dbReference type="NCBIfam" id="TIGR01016">
    <property type="entry name" value="sucCoAbeta"/>
    <property type="match status" value="1"/>
</dbReference>
<dbReference type="PANTHER" id="PTHR11815:SF1">
    <property type="entry name" value="SUCCINATE--COA LIGASE [ADP-FORMING] SUBUNIT BETA, MITOCHONDRIAL"/>
    <property type="match status" value="1"/>
</dbReference>
<dbReference type="PANTHER" id="PTHR11815">
    <property type="entry name" value="SUCCINYL-COA SYNTHETASE BETA CHAIN"/>
    <property type="match status" value="1"/>
</dbReference>
<dbReference type="Pfam" id="PF08442">
    <property type="entry name" value="ATP-grasp_2"/>
    <property type="match status" value="1"/>
</dbReference>
<dbReference type="Pfam" id="PF00549">
    <property type="entry name" value="Ligase_CoA"/>
    <property type="match status" value="1"/>
</dbReference>
<dbReference type="PIRSF" id="PIRSF001554">
    <property type="entry name" value="SucCS_beta"/>
    <property type="match status" value="1"/>
</dbReference>
<dbReference type="SUPFAM" id="SSF56059">
    <property type="entry name" value="Glutathione synthetase ATP-binding domain-like"/>
    <property type="match status" value="1"/>
</dbReference>
<dbReference type="SUPFAM" id="SSF52210">
    <property type="entry name" value="Succinyl-CoA synthetase domains"/>
    <property type="match status" value="1"/>
</dbReference>
<dbReference type="PROSITE" id="PS50975">
    <property type="entry name" value="ATP_GRASP"/>
    <property type="match status" value="1"/>
</dbReference>
<dbReference type="PROSITE" id="PS01217">
    <property type="entry name" value="SUCCINYL_COA_LIG_3"/>
    <property type="match status" value="1"/>
</dbReference>